<proteinExistence type="evidence at protein level"/>
<dbReference type="EC" id="3.4.24.-"/>
<dbReference type="EMBL" id="D10911">
    <property type="protein sequence ID" value="BAA21771.1"/>
    <property type="molecule type" value="Genomic_DNA"/>
</dbReference>
<dbReference type="EMBL" id="X13335">
    <property type="protein sequence ID" value="CAA31712.1"/>
    <property type="molecule type" value="mRNA"/>
</dbReference>
<dbReference type="CCDS" id="CCDS21959.1"/>
<dbReference type="RefSeq" id="NP_031429.1">
    <property type="nucleotide sequence ID" value="NM_007403.4"/>
</dbReference>
<dbReference type="SMR" id="Q05910"/>
<dbReference type="BioGRID" id="197972">
    <property type="interactions" value="9"/>
</dbReference>
<dbReference type="FunCoup" id="Q05910">
    <property type="interactions" value="158"/>
</dbReference>
<dbReference type="IntAct" id="Q05910">
    <property type="interactions" value="1"/>
</dbReference>
<dbReference type="STRING" id="10090.ENSMUSP00000101684"/>
<dbReference type="MEROPS" id="M12.208"/>
<dbReference type="GlyCosmos" id="Q05910">
    <property type="glycosylation" value="4 sites, No reported glycans"/>
</dbReference>
<dbReference type="GlyGen" id="Q05910">
    <property type="glycosylation" value="4 sites"/>
</dbReference>
<dbReference type="iPTMnet" id="Q05910"/>
<dbReference type="PhosphoSitePlus" id="Q05910"/>
<dbReference type="PaxDb" id="10090-ENSMUSP00000101684"/>
<dbReference type="PeptideAtlas" id="Q05910"/>
<dbReference type="ProteomicsDB" id="285616"/>
<dbReference type="Antibodypedia" id="19390">
    <property type="antibodies" value="396 antibodies from 38 providers"/>
</dbReference>
<dbReference type="DNASU" id="11501"/>
<dbReference type="Ensembl" id="ENSMUST00000106069.9">
    <property type="protein sequence ID" value="ENSMUSP00000101684.3"/>
    <property type="gene ID" value="ENSMUSG00000025473.17"/>
</dbReference>
<dbReference type="GeneID" id="11501"/>
<dbReference type="KEGG" id="mmu:11501"/>
<dbReference type="UCSC" id="uc009kgj.2">
    <property type="organism name" value="mouse"/>
</dbReference>
<dbReference type="AGR" id="MGI:107825"/>
<dbReference type="CTD" id="101"/>
<dbReference type="MGI" id="MGI:107825">
    <property type="gene designation" value="Adam8"/>
</dbReference>
<dbReference type="VEuPathDB" id="HostDB:ENSMUSG00000025473"/>
<dbReference type="eggNOG" id="KOG3607">
    <property type="taxonomic scope" value="Eukaryota"/>
</dbReference>
<dbReference type="GeneTree" id="ENSGT00940000158585"/>
<dbReference type="InParanoid" id="Q05910"/>
<dbReference type="OMA" id="HGQDHCL"/>
<dbReference type="PhylomeDB" id="Q05910"/>
<dbReference type="TreeFam" id="TF314733"/>
<dbReference type="Reactome" id="R-MMU-1474228">
    <property type="pathway name" value="Degradation of the extracellular matrix"/>
</dbReference>
<dbReference type="Reactome" id="R-MMU-6798695">
    <property type="pathway name" value="Neutrophil degranulation"/>
</dbReference>
<dbReference type="BioGRID-ORCS" id="11501">
    <property type="hits" value="1 hit in 63 CRISPR screens"/>
</dbReference>
<dbReference type="ChiTaRS" id="Adam8">
    <property type="organism name" value="mouse"/>
</dbReference>
<dbReference type="PRO" id="PR:Q05910"/>
<dbReference type="Proteomes" id="UP000000589">
    <property type="component" value="Chromosome 7"/>
</dbReference>
<dbReference type="RNAct" id="Q05910">
    <property type="molecule type" value="protein"/>
</dbReference>
<dbReference type="Bgee" id="ENSMUSG00000025473">
    <property type="expression patterns" value="Expressed in granulocyte and 161 other cell types or tissues"/>
</dbReference>
<dbReference type="ExpressionAtlas" id="Q05910">
    <property type="expression patterns" value="baseline and differential"/>
</dbReference>
<dbReference type="GO" id="GO:0071133">
    <property type="term" value="C:alpha9-beta1 integrin-ADAM8 complex"/>
    <property type="evidence" value="ECO:0000314"/>
    <property type="project" value="BHF-UCL"/>
</dbReference>
<dbReference type="GO" id="GO:0009986">
    <property type="term" value="C:cell surface"/>
    <property type="evidence" value="ECO:0007669"/>
    <property type="project" value="Ensembl"/>
</dbReference>
<dbReference type="GO" id="GO:0005737">
    <property type="term" value="C:cytoplasm"/>
    <property type="evidence" value="ECO:0000250"/>
    <property type="project" value="BHF-UCL"/>
</dbReference>
<dbReference type="GO" id="GO:0032127">
    <property type="term" value="C:dense core granule membrane"/>
    <property type="evidence" value="ECO:0000250"/>
    <property type="project" value="BHF-UCL"/>
</dbReference>
<dbReference type="GO" id="GO:0032010">
    <property type="term" value="C:phagolysosome"/>
    <property type="evidence" value="ECO:0000250"/>
    <property type="project" value="BHF-UCL"/>
</dbReference>
<dbReference type="GO" id="GO:0005886">
    <property type="term" value="C:plasma membrane"/>
    <property type="evidence" value="ECO:0000314"/>
    <property type="project" value="BHF-UCL"/>
</dbReference>
<dbReference type="GO" id="GO:0002102">
    <property type="term" value="C:podosome"/>
    <property type="evidence" value="ECO:0000250"/>
    <property type="project" value="BHF-UCL"/>
</dbReference>
<dbReference type="GO" id="GO:0042581">
    <property type="term" value="C:specific granule"/>
    <property type="evidence" value="ECO:0000250"/>
    <property type="project" value="BHF-UCL"/>
</dbReference>
<dbReference type="GO" id="GO:0070820">
    <property type="term" value="C:tertiary granule"/>
    <property type="evidence" value="ECO:0000250"/>
    <property type="project" value="BHF-UCL"/>
</dbReference>
<dbReference type="GO" id="GO:0005509">
    <property type="term" value="F:calcium ion binding"/>
    <property type="evidence" value="ECO:0000314"/>
    <property type="project" value="BHF-UCL"/>
</dbReference>
<dbReference type="GO" id="GO:0050839">
    <property type="term" value="F:cell adhesion molecule binding"/>
    <property type="evidence" value="ECO:0000353"/>
    <property type="project" value="BHF-UCL"/>
</dbReference>
<dbReference type="GO" id="GO:0034987">
    <property type="term" value="F:immunoglobulin receptor binding"/>
    <property type="evidence" value="ECO:0007669"/>
    <property type="project" value="Ensembl"/>
</dbReference>
<dbReference type="GO" id="GO:0005178">
    <property type="term" value="F:integrin binding"/>
    <property type="evidence" value="ECO:0000304"/>
    <property type="project" value="BHF-UCL"/>
</dbReference>
<dbReference type="GO" id="GO:0004222">
    <property type="term" value="F:metalloendopeptidase activity"/>
    <property type="evidence" value="ECO:0007669"/>
    <property type="project" value="InterPro"/>
</dbReference>
<dbReference type="GO" id="GO:0008237">
    <property type="term" value="F:metallopeptidase activity"/>
    <property type="evidence" value="ECO:0000314"/>
    <property type="project" value="BHF-UCL"/>
</dbReference>
<dbReference type="GO" id="GO:0032813">
    <property type="term" value="F:tumor necrosis factor receptor superfamily binding"/>
    <property type="evidence" value="ECO:0007669"/>
    <property type="project" value="Ensembl"/>
</dbReference>
<dbReference type="GO" id="GO:0008270">
    <property type="term" value="F:zinc ion binding"/>
    <property type="evidence" value="ECO:0000314"/>
    <property type="project" value="BHF-UCL"/>
</dbReference>
<dbReference type="GO" id="GO:0001525">
    <property type="term" value="P:angiogenesis"/>
    <property type="evidence" value="ECO:0000314"/>
    <property type="project" value="BHF-UCL"/>
</dbReference>
<dbReference type="GO" id="GO:0043534">
    <property type="term" value="P:blood vessel endothelial cell migration"/>
    <property type="evidence" value="ECO:0000303"/>
    <property type="project" value="BHF-UCL"/>
</dbReference>
<dbReference type="GO" id="GO:0007249">
    <property type="term" value="P:canonical NF-kappaB signal transduction"/>
    <property type="evidence" value="ECO:0000314"/>
    <property type="project" value="BHF-UCL"/>
</dbReference>
<dbReference type="GO" id="GO:0000902">
    <property type="term" value="P:cell morphogenesis"/>
    <property type="evidence" value="ECO:0000315"/>
    <property type="project" value="BHF-UCL"/>
</dbReference>
<dbReference type="GO" id="GO:0098609">
    <property type="term" value="P:cell-cell adhesion"/>
    <property type="evidence" value="ECO:0000314"/>
    <property type="project" value="MGI"/>
</dbReference>
<dbReference type="GO" id="GO:0007160">
    <property type="term" value="P:cell-matrix adhesion"/>
    <property type="evidence" value="ECO:0000304"/>
    <property type="project" value="BHF-UCL"/>
</dbReference>
<dbReference type="GO" id="GO:0071456">
    <property type="term" value="P:cellular response to hypoxia"/>
    <property type="evidence" value="ECO:0000250"/>
    <property type="project" value="BHF-UCL"/>
</dbReference>
<dbReference type="GO" id="GO:0002523">
    <property type="term" value="P:leukocyte migration involved in inflammatory response"/>
    <property type="evidence" value="ECO:0000315"/>
    <property type="project" value="BHF-UCL"/>
</dbReference>
<dbReference type="GO" id="GO:0048247">
    <property type="term" value="P:lymphocyte chemotaxis"/>
    <property type="evidence" value="ECO:0000314"/>
    <property type="project" value="BHF-UCL"/>
</dbReference>
<dbReference type="GO" id="GO:0061025">
    <property type="term" value="P:membrane fusion"/>
    <property type="evidence" value="ECO:0000304"/>
    <property type="project" value="BHF-UCL"/>
</dbReference>
<dbReference type="GO" id="GO:0043524">
    <property type="term" value="P:negative regulation of neuron apoptotic process"/>
    <property type="evidence" value="ECO:0000314"/>
    <property type="project" value="BHF-UCL"/>
</dbReference>
<dbReference type="GO" id="GO:2000399">
    <property type="term" value="P:negative regulation of thymocyte aggregation"/>
    <property type="evidence" value="ECO:0000303"/>
    <property type="project" value="BHF-UCL"/>
</dbReference>
<dbReference type="GO" id="GO:0072675">
    <property type="term" value="P:osteoclast fusion"/>
    <property type="evidence" value="ECO:0000304"/>
    <property type="project" value="BHF-UCL"/>
</dbReference>
<dbReference type="GO" id="GO:0002675">
    <property type="term" value="P:positive regulation of acute inflammatory response"/>
    <property type="evidence" value="ECO:0000315"/>
    <property type="project" value="BHF-UCL"/>
</dbReference>
<dbReference type="GO" id="GO:0045780">
    <property type="term" value="P:positive regulation of bone resorption"/>
    <property type="evidence" value="ECO:0000314"/>
    <property type="project" value="BHF-UCL"/>
</dbReference>
<dbReference type="GO" id="GO:0045785">
    <property type="term" value="P:positive regulation of cell adhesion"/>
    <property type="evidence" value="ECO:0000314"/>
    <property type="project" value="BHF-UCL"/>
</dbReference>
<dbReference type="GO" id="GO:0002693">
    <property type="term" value="P:positive regulation of cellular extravasation"/>
    <property type="evidence" value="ECO:0000315"/>
    <property type="project" value="BHF-UCL"/>
</dbReference>
<dbReference type="GO" id="GO:2000418">
    <property type="term" value="P:positive regulation of eosinophil migration"/>
    <property type="evidence" value="ECO:0000315"/>
    <property type="project" value="BHF-UCL"/>
</dbReference>
<dbReference type="GO" id="GO:0010718">
    <property type="term" value="P:positive regulation of epithelial to mesenchymal transition"/>
    <property type="evidence" value="ECO:0000315"/>
    <property type="project" value="UniProtKB"/>
</dbReference>
<dbReference type="GO" id="GO:2000415">
    <property type="term" value="P:positive regulation of fibronectin-dependent thymocyte migration"/>
    <property type="evidence" value="ECO:0000315"/>
    <property type="project" value="BHF-UCL"/>
</dbReference>
<dbReference type="GO" id="GO:0050729">
    <property type="term" value="P:positive regulation of inflammatory response"/>
    <property type="evidence" value="ECO:0000314"/>
    <property type="project" value="BHF-UCL"/>
</dbReference>
<dbReference type="GO" id="GO:0045089">
    <property type="term" value="P:positive regulation of innate immune response"/>
    <property type="evidence" value="ECO:0000314"/>
    <property type="project" value="BHF-UCL"/>
</dbReference>
<dbReference type="GO" id="GO:0043410">
    <property type="term" value="P:positive regulation of MAPK cascade"/>
    <property type="evidence" value="ECO:0000314"/>
    <property type="project" value="BHF-UCL"/>
</dbReference>
<dbReference type="GO" id="GO:0051044">
    <property type="term" value="P:positive regulation of membrane protein ectodomain proteolysis"/>
    <property type="evidence" value="ECO:0000314"/>
    <property type="project" value="BHF-UCL"/>
</dbReference>
<dbReference type="GO" id="GO:2000391">
    <property type="term" value="P:positive regulation of neutrophil extravasation"/>
    <property type="evidence" value="ECO:0007669"/>
    <property type="project" value="Ensembl"/>
</dbReference>
<dbReference type="GO" id="GO:0051897">
    <property type="term" value="P:positive regulation of phosphatidylinositol 3-kinase/protein kinase B signal transduction"/>
    <property type="evidence" value="ECO:0000314"/>
    <property type="project" value="BHF-UCL"/>
</dbReference>
<dbReference type="GO" id="GO:0033089">
    <property type="term" value="P:positive regulation of T cell differentiation in thymus"/>
    <property type="evidence" value="ECO:0000314"/>
    <property type="project" value="BHF-UCL"/>
</dbReference>
<dbReference type="GO" id="GO:2000406">
    <property type="term" value="P:positive regulation of T cell migration"/>
    <property type="evidence" value="ECO:0000315"/>
    <property type="project" value="BHF-UCL"/>
</dbReference>
<dbReference type="GO" id="GO:0070245">
    <property type="term" value="P:positive regulation of thymocyte apoptotic process"/>
    <property type="evidence" value="ECO:0000315"/>
    <property type="project" value="BHF-UCL"/>
</dbReference>
<dbReference type="GO" id="GO:2000309">
    <property type="term" value="P:positive regulation of tumor necrosis factor (ligand) superfamily member 11 production"/>
    <property type="evidence" value="ECO:0000315"/>
    <property type="project" value="BHF-UCL"/>
</dbReference>
<dbReference type="GO" id="GO:0006508">
    <property type="term" value="P:proteolysis"/>
    <property type="evidence" value="ECO:0007669"/>
    <property type="project" value="UniProtKB-KW"/>
</dbReference>
<dbReference type="GO" id="GO:0022407">
    <property type="term" value="P:regulation of cell-cell adhesion"/>
    <property type="evidence" value="ECO:0000250"/>
    <property type="project" value="BHF-UCL"/>
</dbReference>
<dbReference type="GO" id="GO:0045670">
    <property type="term" value="P:regulation of osteoclast differentiation"/>
    <property type="evidence" value="ECO:0000303"/>
    <property type="project" value="BHF-UCL"/>
</dbReference>
<dbReference type="GO" id="GO:0023061">
    <property type="term" value="P:signal release"/>
    <property type="evidence" value="ECO:0007669"/>
    <property type="project" value="Ensembl"/>
</dbReference>
<dbReference type="GO" id="GO:0048729">
    <property type="term" value="P:tissue morphogenesis"/>
    <property type="evidence" value="ECO:0000304"/>
    <property type="project" value="BHF-UCL"/>
</dbReference>
<dbReference type="CDD" id="cd04269">
    <property type="entry name" value="ZnMc_adamalysin_II_like"/>
    <property type="match status" value="1"/>
</dbReference>
<dbReference type="FunFam" id="3.40.390.10:FF:000002">
    <property type="entry name" value="Disintegrin and metalloproteinase domain-containing protein 22"/>
    <property type="match status" value="1"/>
</dbReference>
<dbReference type="FunFam" id="4.10.70.10:FF:000001">
    <property type="entry name" value="Disintegrin and metalloproteinase domain-containing protein 22"/>
    <property type="match status" value="1"/>
</dbReference>
<dbReference type="Gene3D" id="3.40.1620.60">
    <property type="match status" value="1"/>
</dbReference>
<dbReference type="Gene3D" id="3.40.390.10">
    <property type="entry name" value="Collagenase (Catalytic Domain)"/>
    <property type="match status" value="1"/>
</dbReference>
<dbReference type="Gene3D" id="4.10.70.10">
    <property type="entry name" value="Disintegrin domain"/>
    <property type="match status" value="1"/>
</dbReference>
<dbReference type="Gene3D" id="2.60.120.260">
    <property type="entry name" value="Galactose-binding domain-like"/>
    <property type="match status" value="1"/>
</dbReference>
<dbReference type="InterPro" id="IPR006586">
    <property type="entry name" value="ADAM_Cys-rich"/>
</dbReference>
<dbReference type="InterPro" id="IPR018358">
    <property type="entry name" value="Disintegrin_CS"/>
</dbReference>
<dbReference type="InterPro" id="IPR001762">
    <property type="entry name" value="Disintegrin_dom"/>
</dbReference>
<dbReference type="InterPro" id="IPR036436">
    <property type="entry name" value="Disintegrin_dom_sf"/>
</dbReference>
<dbReference type="InterPro" id="IPR000742">
    <property type="entry name" value="EGF-like_dom"/>
</dbReference>
<dbReference type="InterPro" id="IPR024079">
    <property type="entry name" value="MetalloPept_cat_dom_sf"/>
</dbReference>
<dbReference type="InterPro" id="IPR001590">
    <property type="entry name" value="Peptidase_M12B"/>
</dbReference>
<dbReference type="InterPro" id="IPR002870">
    <property type="entry name" value="Peptidase_M12B_N"/>
</dbReference>
<dbReference type="InterPro" id="IPR034027">
    <property type="entry name" value="Reprolysin_adamalysin"/>
</dbReference>
<dbReference type="PANTHER" id="PTHR11905">
    <property type="entry name" value="ADAM A DISINTEGRIN AND METALLOPROTEASE DOMAIN"/>
    <property type="match status" value="1"/>
</dbReference>
<dbReference type="PANTHER" id="PTHR11905:SF20">
    <property type="entry name" value="DISINTEGRIN AND METALLOPROTEINASE DOMAIN-CONTAINING PROTEIN 8"/>
    <property type="match status" value="1"/>
</dbReference>
<dbReference type="Pfam" id="PF08516">
    <property type="entry name" value="ADAM_CR"/>
    <property type="match status" value="1"/>
</dbReference>
<dbReference type="Pfam" id="PF00200">
    <property type="entry name" value="Disintegrin"/>
    <property type="match status" value="1"/>
</dbReference>
<dbReference type="Pfam" id="PF01562">
    <property type="entry name" value="Pep_M12B_propep"/>
    <property type="match status" value="1"/>
</dbReference>
<dbReference type="Pfam" id="PF01421">
    <property type="entry name" value="Reprolysin"/>
    <property type="match status" value="1"/>
</dbReference>
<dbReference type="PRINTS" id="PR00289">
    <property type="entry name" value="DISINTEGRIN"/>
</dbReference>
<dbReference type="SMART" id="SM00608">
    <property type="entry name" value="ACR"/>
    <property type="match status" value="1"/>
</dbReference>
<dbReference type="SMART" id="SM00050">
    <property type="entry name" value="DISIN"/>
    <property type="match status" value="1"/>
</dbReference>
<dbReference type="SUPFAM" id="SSF57552">
    <property type="entry name" value="Blood coagulation inhibitor (disintegrin)"/>
    <property type="match status" value="1"/>
</dbReference>
<dbReference type="SUPFAM" id="SSF55486">
    <property type="entry name" value="Metalloproteases ('zincins'), catalytic domain"/>
    <property type="match status" value="1"/>
</dbReference>
<dbReference type="PROSITE" id="PS50215">
    <property type="entry name" value="ADAM_MEPRO"/>
    <property type="match status" value="1"/>
</dbReference>
<dbReference type="PROSITE" id="PS00427">
    <property type="entry name" value="DISINTEGRIN_1"/>
    <property type="match status" value="1"/>
</dbReference>
<dbReference type="PROSITE" id="PS50214">
    <property type="entry name" value="DISINTEGRIN_2"/>
    <property type="match status" value="1"/>
</dbReference>
<dbReference type="PROSITE" id="PS00022">
    <property type="entry name" value="EGF_1"/>
    <property type="match status" value="1"/>
</dbReference>
<dbReference type="PROSITE" id="PS01186">
    <property type="entry name" value="EGF_2"/>
    <property type="match status" value="1"/>
</dbReference>
<dbReference type="PROSITE" id="PS50026">
    <property type="entry name" value="EGF_3"/>
    <property type="match status" value="1"/>
</dbReference>
<dbReference type="PROSITE" id="PS00142">
    <property type="entry name" value="ZINC_PROTEASE"/>
    <property type="match status" value="1"/>
</dbReference>
<comment type="function">
    <text>Possible involvement in extravasation of leukocytes.</text>
</comment>
<comment type="cofactor">
    <cofactor evidence="2">
        <name>Zn(2+)</name>
        <dbReference type="ChEBI" id="CHEBI:29105"/>
    </cofactor>
    <text evidence="2">Binds 1 zinc ion per subunit.</text>
</comment>
<comment type="subunit">
    <text evidence="1">Interacts with FST3.</text>
</comment>
<comment type="subcellular location">
    <subcellularLocation>
        <location>Membrane</location>
        <topology>Single-pass type I membrane protein</topology>
    </subcellularLocation>
</comment>
<comment type="tissue specificity">
    <text>Macrophages.</text>
</comment>
<sequence length="826" mass="90046">MLGLWLLSVLWTPAVAPGPPLPHVKQYEVVWPRRLAASRSRRALPSHWGQYPESLSYALGTSGHVFTLHLRKNRDLLGSSYTETYSAANGSEVTEQLQEQDHCLYQGHVEGYEGSAASISTCAGLRGFFRVGSTVHLIEPLDADEEGQHAMYQAKHLQQKAGTCGVKDTNLNDLGPRALEIYRAQPRNWLIPRETRYVELYVVADSQEFQKLGSREAVRQRVLEVVNHVDKLYQELSFRVVLVGLEIWNKDKFYISRYANVTLENFLSWREQNLQGQHPHDNVQLITGVDFIGSTVGLAKVSALCSRHSGAVNQDHSKNSIGVASTMAHELGHNLGMSHDEDIPGCYCPEPREGGGCIMTESIGSKFPRIFSRCSKIDLESFVTKPQTGCLTNVPDVNRFVGGPVCGNLFVEHGEQCDCGTPQDCQNPCCNATTCQLVKGAECASGTCCHECKVKPAGEVCRLSKDKCDLEEFCDGRKPTCPEDAFQQNGTPCPGGYCFDGSCPTLAQQCRDLWGPGARVAADSCYTFSIPPGCNGRMYSGRINRCGALYCEGGQKPLERSFCTFSSNHGVCHALGTGSNIDTFELVLQGTKCEEGKVCMDGSCQDLRVYRSENCSAKCNNHGVCNHKRECHCHKGWAPPNCVQRLADVSDEQAASTSLPVSVVVVLVILVAAMVIVAGIVIYRKAPRQIQRRSVAPKPISGLSNPLFYTRDSSLPAKNRPPDPSETVSTNQPPRPIVKPKRPPPAPPGAVSSSPLPVPVYAPKIPNQFRPDPPTKPLPELKPKQVKPTFAPPTPPVKPGTGGTVPGATQGAGEPKVALKVPIQKR</sequence>
<accession>Q05910</accession>
<keyword id="KW-1015">Disulfide bond</keyword>
<keyword id="KW-0245">EGF-like domain</keyword>
<keyword id="KW-0325">Glycoprotein</keyword>
<keyword id="KW-0378">Hydrolase</keyword>
<keyword id="KW-0472">Membrane</keyword>
<keyword id="KW-0479">Metal-binding</keyword>
<keyword id="KW-0482">Metalloprotease</keyword>
<keyword id="KW-0645">Protease</keyword>
<keyword id="KW-1185">Reference proteome</keyword>
<keyword id="KW-0732">Signal</keyword>
<keyword id="KW-0812">Transmembrane</keyword>
<keyword id="KW-1133">Transmembrane helix</keyword>
<keyword id="KW-0862">Zinc</keyword>
<evidence type="ECO:0000250" key="1"/>
<evidence type="ECO:0000250" key="2">
    <source>
        <dbReference type="UniProtKB" id="P78325"/>
    </source>
</evidence>
<evidence type="ECO:0000250" key="3">
    <source>
        <dbReference type="UniProtKB" id="Q10741"/>
    </source>
</evidence>
<evidence type="ECO:0000255" key="4"/>
<evidence type="ECO:0000255" key="5">
    <source>
        <dbReference type="PROSITE-ProRule" id="PRU00068"/>
    </source>
</evidence>
<evidence type="ECO:0000255" key="6">
    <source>
        <dbReference type="PROSITE-ProRule" id="PRU00076"/>
    </source>
</evidence>
<evidence type="ECO:0000255" key="7">
    <source>
        <dbReference type="PROSITE-ProRule" id="PRU00276"/>
    </source>
</evidence>
<evidence type="ECO:0000255" key="8">
    <source>
        <dbReference type="PROSITE-ProRule" id="PRU10095"/>
    </source>
</evidence>
<evidence type="ECO:0000256" key="9">
    <source>
        <dbReference type="SAM" id="MobiDB-lite"/>
    </source>
</evidence>
<feature type="signal peptide" evidence="4">
    <location>
        <begin position="1"/>
        <end position="16"/>
    </location>
</feature>
<feature type="chain" id="PRO_0000029061" description="Disintegrin and metalloproteinase domain-containing protein 8">
    <location>
        <begin position="17"/>
        <end position="826"/>
    </location>
</feature>
<feature type="topological domain" description="Extracellular" evidence="4">
    <location>
        <begin position="17"/>
        <end position="658"/>
    </location>
</feature>
<feature type="transmembrane region" description="Helical" evidence="4">
    <location>
        <begin position="659"/>
        <end position="683"/>
    </location>
</feature>
<feature type="topological domain" description="Cytoplasmic" evidence="4">
    <location>
        <begin position="684"/>
        <end position="826"/>
    </location>
</feature>
<feature type="domain" description="Peptidase M12B" evidence="7">
    <location>
        <begin position="196"/>
        <end position="395"/>
    </location>
</feature>
<feature type="domain" description="Disintegrin" evidence="5">
    <location>
        <begin position="403"/>
        <end position="489"/>
    </location>
</feature>
<feature type="domain" description="EGF-like" evidence="6">
    <location>
        <begin position="611"/>
        <end position="643"/>
    </location>
</feature>
<feature type="region of interest" description="Disordered" evidence="9">
    <location>
        <begin position="701"/>
        <end position="826"/>
    </location>
</feature>
<feature type="compositionally biased region" description="Pro residues" evidence="9">
    <location>
        <begin position="733"/>
        <end position="748"/>
    </location>
</feature>
<feature type="compositionally biased region" description="Low complexity" evidence="9">
    <location>
        <begin position="749"/>
        <end position="763"/>
    </location>
</feature>
<feature type="active site" evidence="7 8">
    <location>
        <position position="330"/>
    </location>
</feature>
<feature type="binding site" evidence="2">
    <location>
        <position position="329"/>
    </location>
    <ligand>
        <name>Zn(2+)</name>
        <dbReference type="ChEBI" id="CHEBI:29105"/>
        <note>catalytic</note>
    </ligand>
</feature>
<feature type="binding site" evidence="2">
    <location>
        <position position="333"/>
    </location>
    <ligand>
        <name>Zn(2+)</name>
        <dbReference type="ChEBI" id="CHEBI:29105"/>
        <note>catalytic</note>
    </ligand>
</feature>
<feature type="binding site" evidence="2">
    <location>
        <position position="339"/>
    </location>
    <ligand>
        <name>Zn(2+)</name>
        <dbReference type="ChEBI" id="CHEBI:29105"/>
        <note>catalytic</note>
    </ligand>
</feature>
<feature type="glycosylation site" description="N-linked (GlcNAc...) asparagine" evidence="4">
    <location>
        <position position="89"/>
    </location>
</feature>
<feature type="glycosylation site" description="N-linked (GlcNAc...) asparagine" evidence="4">
    <location>
        <position position="260"/>
    </location>
</feature>
<feature type="glycosylation site" description="N-linked (GlcNAc...) asparagine" evidence="4">
    <location>
        <position position="431"/>
    </location>
</feature>
<feature type="glycosylation site" description="N-linked (GlcNAc...) asparagine" evidence="4">
    <location>
        <position position="614"/>
    </location>
</feature>
<feature type="disulfide bond" evidence="1">
    <location>
        <begin position="305"/>
        <end position="390"/>
    </location>
</feature>
<feature type="disulfide bond" evidence="1">
    <location>
        <begin position="346"/>
        <end position="374"/>
    </location>
</feature>
<feature type="disulfide bond" evidence="1">
    <location>
        <begin position="348"/>
        <end position="357"/>
    </location>
</feature>
<feature type="disulfide bond" evidence="3">
    <location>
        <begin position="430"/>
        <end position="452"/>
    </location>
</feature>
<feature type="disulfide bond" evidence="3">
    <location>
        <begin position="443"/>
        <end position="449"/>
    </location>
</feature>
<feature type="disulfide bond" evidence="3">
    <location>
        <begin position="461"/>
        <end position="481"/>
    </location>
</feature>
<feature type="disulfide bond" evidence="3">
    <location>
        <begin position="468"/>
        <end position="498"/>
    </location>
</feature>
<feature type="disulfide bond" evidence="3">
    <location>
        <begin position="493"/>
        <end position="503"/>
    </location>
</feature>
<feature type="disulfide bond" evidence="3">
    <location>
        <begin position="563"/>
        <end position="615"/>
    </location>
</feature>
<feature type="disulfide bond" evidence="1">
    <location>
        <begin position="615"/>
        <end position="625"/>
    </location>
</feature>
<feature type="disulfide bond" evidence="1">
    <location>
        <begin position="619"/>
        <end position="631"/>
    </location>
</feature>
<feature type="disulfide bond" evidence="1">
    <location>
        <begin position="633"/>
        <end position="642"/>
    </location>
</feature>
<organism>
    <name type="scientific">Mus musculus</name>
    <name type="common">Mouse</name>
    <dbReference type="NCBI Taxonomy" id="10090"/>
    <lineage>
        <taxon>Eukaryota</taxon>
        <taxon>Metazoa</taxon>
        <taxon>Chordata</taxon>
        <taxon>Craniata</taxon>
        <taxon>Vertebrata</taxon>
        <taxon>Euteleostomi</taxon>
        <taxon>Mammalia</taxon>
        <taxon>Eutheria</taxon>
        <taxon>Euarchontoglires</taxon>
        <taxon>Glires</taxon>
        <taxon>Rodentia</taxon>
        <taxon>Myomorpha</taxon>
        <taxon>Muroidea</taxon>
        <taxon>Muridae</taxon>
        <taxon>Murinae</taxon>
        <taxon>Mus</taxon>
        <taxon>Mus</taxon>
    </lineage>
</organism>
<gene>
    <name type="primary">Adam8</name>
    <name type="synonym">Ms2</name>
</gene>
<name>ADAM8_MOUSE</name>
<reference key="1">
    <citation type="submission" date="1996-01" db="EMBL/GenBank/DDBJ databases">
        <authorList>
            <person name="Yamamoto S."/>
            <person name="Yoshiyama K."/>
            <person name="Setoguchi M."/>
            <person name="Matsuura K."/>
            <person name="Higuchi Y."/>
            <person name="Akizuki S."/>
        </authorList>
    </citation>
    <scope>NUCLEOTIDE SEQUENCE</scope>
    <source>
        <strain>ICR</strain>
    </source>
</reference>
<reference key="2">
    <citation type="journal article" date="1997" name="J. Biol. Chem.">
        <title>Structure of the murine CD156 gene, characterization of its promoter, and chromosomal location.</title>
        <authorList>
            <person name="Kataoka M."/>
            <person name="Yoshiyama K."/>
            <person name="Matsuura K."/>
            <person name="Hijiya N."/>
            <person name="Higuchi Y."/>
            <person name="Yamamoto S."/>
        </authorList>
    </citation>
    <scope>NUCLEOTIDE SEQUENCE [GENOMIC DNA]</scope>
    <source>
        <strain>BALB/cJ</strain>
        <tissue>Liver</tissue>
    </source>
</reference>
<reference key="3">
    <citation type="journal article" date="1990" name="Int. Immunol.">
        <title>Molecular cloning of cDNA encoding MS2 antigen, a novel cell surface antigen strongly expressed in murine monocytic lineage.</title>
        <authorList>
            <person name="Yoshida S."/>
            <person name="Setoguchi M."/>
            <person name="Higuchi Y."/>
            <person name="Akizuki S."/>
            <person name="Yamamoto S."/>
        </authorList>
    </citation>
    <scope>PRELIMINARY NUCLEOTIDE SEQUENCE [MRNA]</scope>
    <source>
        <strain>ICR</strain>
    </source>
</reference>
<reference key="4">
    <citation type="journal article" date="2009" name="Immunity">
        <title>The phagosomal proteome in interferon-gamma-activated macrophages.</title>
        <authorList>
            <person name="Trost M."/>
            <person name="English L."/>
            <person name="Lemieux S."/>
            <person name="Courcelles M."/>
            <person name="Desjardins M."/>
            <person name="Thibault P."/>
        </authorList>
    </citation>
    <scope>IDENTIFICATION BY MASS SPECTROMETRY [LARGE SCALE ANALYSIS]</scope>
</reference>
<protein>
    <recommendedName>
        <fullName>Disintegrin and metalloproteinase domain-containing protein 8</fullName>
        <shortName>ADAM 8</shortName>
        <ecNumber>3.4.24.-</ecNumber>
    </recommendedName>
    <alternativeName>
        <fullName>Cell surface antigen MS2</fullName>
    </alternativeName>
    <alternativeName>
        <fullName>Macrophage cysteine-rich glycoprotein</fullName>
    </alternativeName>
    <cdAntigenName>CD156a</cdAntigenName>
</protein>